<feature type="chain" id="PRO_0000161058" description="Histidine ammonia-lyase">
    <location>
        <begin position="1"/>
        <end position="657"/>
    </location>
</feature>
<feature type="modified residue" description="2,3-didehydroalanine (Ser)" evidence="4">
    <location>
        <position position="254"/>
    </location>
</feature>
<feature type="modified residue" description="Phosphothreonine" evidence="3">
    <location>
        <position position="396"/>
    </location>
</feature>
<feature type="modified residue" description="Phosphoserine" evidence="2">
    <location>
        <position position="635"/>
    </location>
</feature>
<feature type="modified residue" description="Phosphothreonine" evidence="3">
    <location>
        <position position="637"/>
    </location>
</feature>
<feature type="modified residue" description="Phosphoserine" evidence="3">
    <location>
        <position position="648"/>
    </location>
</feature>
<feature type="cross-link" description="5-imidazolinone (Ala-Gly)" evidence="1">
    <location>
        <begin position="253"/>
        <end position="255"/>
    </location>
</feature>
<feature type="splice variant" id="VSP_046003" description="In isoform 3." evidence="10">
    <location>
        <begin position="1"/>
        <end position="208"/>
    </location>
</feature>
<feature type="splice variant" id="VSP_044704" description="In isoform 2." evidence="10">
    <original>PWIKDRFMAPDIEAAHRLLLEQKVWEVAAPYIEKYRMEHIPESRPLSPTAFSLQFLHKKSTKIPESEDL</original>
    <variation>FGK</variation>
    <location>
        <begin position="589"/>
        <end position="657"/>
    </location>
</feature>
<feature type="sequence variant" id="VAR_022915" description="In HISTID; dbSNP:rs121434327." evidence="7">
    <original>R</original>
    <variation>T</variation>
    <location>
        <position position="206"/>
    </location>
</feature>
<feature type="sequence variant" id="VAR_022916" description="In HISTID; dbSNP:rs121434328." evidence="7">
    <original>R</original>
    <variation>L</variation>
    <location>
        <position position="208"/>
    </location>
</feature>
<feature type="sequence variant" id="VAR_022917" description="In HISTID; dbSNP:rs121434329." evidence="7">
    <original>P</original>
    <variation>L</variation>
    <location>
        <position position="259"/>
    </location>
</feature>
<feature type="sequence variant" id="VAR_022918" description="In HISTID; dbSNP:rs121434330." evidence="7">
    <original>R</original>
    <variation>P</variation>
    <location>
        <position position="322"/>
    </location>
</feature>
<feature type="sequence variant" id="VAR_006042" description="In dbSNP:rs7297245." evidence="5 6 8 9">
    <original>V</original>
    <variation>I</variation>
    <location>
        <position position="439"/>
    </location>
</feature>
<feature type="sequence conflict" description="In Ref. 3; BAG64570." evidence="11" ref="3">
    <original>V</original>
    <variation>M</variation>
    <location>
        <position position="549"/>
    </location>
</feature>
<evidence type="ECO:0000250" key="1"/>
<evidence type="ECO:0000250" key="2">
    <source>
        <dbReference type="UniProtKB" id="P21213"/>
    </source>
</evidence>
<evidence type="ECO:0000250" key="3">
    <source>
        <dbReference type="UniProtKB" id="P35492"/>
    </source>
</evidence>
<evidence type="ECO:0000255" key="4">
    <source>
        <dbReference type="PROSITE-ProRule" id="PRU10122"/>
    </source>
</evidence>
<evidence type="ECO:0000269" key="5">
    <source>
    </source>
</evidence>
<evidence type="ECO:0000269" key="6">
    <source>
    </source>
</evidence>
<evidence type="ECO:0000269" key="7">
    <source>
    </source>
</evidence>
<evidence type="ECO:0000269" key="8">
    <source>
    </source>
</evidence>
<evidence type="ECO:0000269" key="9">
    <source ref="5"/>
</evidence>
<evidence type="ECO:0000303" key="10">
    <source>
    </source>
</evidence>
<evidence type="ECO:0000305" key="11"/>
<reference key="1">
    <citation type="journal article" date="1993" name="Biochim. Biophys. Acta">
        <title>Molecular cloning of a cDNA encoding human histidase.</title>
        <authorList>
            <person name="Suchi M."/>
            <person name="Harada N."/>
            <person name="Wada Y."/>
            <person name="Takagi Y."/>
        </authorList>
    </citation>
    <scope>NUCLEOTIDE SEQUENCE [MRNA] (ISOFORM 1)</scope>
    <source>
        <tissue>Liver</tissue>
    </source>
</reference>
<reference key="2">
    <citation type="journal article" date="1995" name="Genomics">
        <title>Molecular cloning and structural characterization of the human histidase gene (HAL).</title>
        <authorList>
            <person name="Suchi M."/>
            <person name="Sano H."/>
            <person name="Mizuno H."/>
            <person name="Wada Y."/>
        </authorList>
    </citation>
    <scope>NUCLEOTIDE SEQUENCE [GENOMIC DNA]</scope>
    <scope>VARIANT ILE-439</scope>
</reference>
<reference key="3">
    <citation type="journal article" date="2004" name="Nat. Genet.">
        <title>Complete sequencing and characterization of 21,243 full-length human cDNAs.</title>
        <authorList>
            <person name="Ota T."/>
            <person name="Suzuki Y."/>
            <person name="Nishikawa T."/>
            <person name="Otsuki T."/>
            <person name="Sugiyama T."/>
            <person name="Irie R."/>
            <person name="Wakamatsu A."/>
            <person name="Hayashi K."/>
            <person name="Sato H."/>
            <person name="Nagai K."/>
            <person name="Kimura K."/>
            <person name="Makita H."/>
            <person name="Sekine M."/>
            <person name="Obayashi M."/>
            <person name="Nishi T."/>
            <person name="Shibahara T."/>
            <person name="Tanaka T."/>
            <person name="Ishii S."/>
            <person name="Yamamoto J."/>
            <person name="Saito K."/>
            <person name="Kawai Y."/>
            <person name="Isono Y."/>
            <person name="Nakamura Y."/>
            <person name="Nagahari K."/>
            <person name="Murakami K."/>
            <person name="Yasuda T."/>
            <person name="Iwayanagi T."/>
            <person name="Wagatsuma M."/>
            <person name="Shiratori A."/>
            <person name="Sudo H."/>
            <person name="Hosoiri T."/>
            <person name="Kaku Y."/>
            <person name="Kodaira H."/>
            <person name="Kondo H."/>
            <person name="Sugawara M."/>
            <person name="Takahashi M."/>
            <person name="Kanda K."/>
            <person name="Yokoi T."/>
            <person name="Furuya T."/>
            <person name="Kikkawa E."/>
            <person name="Omura Y."/>
            <person name="Abe K."/>
            <person name="Kamihara K."/>
            <person name="Katsuta N."/>
            <person name="Sato K."/>
            <person name="Tanikawa M."/>
            <person name="Yamazaki M."/>
            <person name="Ninomiya K."/>
            <person name="Ishibashi T."/>
            <person name="Yamashita H."/>
            <person name="Murakawa K."/>
            <person name="Fujimori K."/>
            <person name="Tanai H."/>
            <person name="Kimata M."/>
            <person name="Watanabe M."/>
            <person name="Hiraoka S."/>
            <person name="Chiba Y."/>
            <person name="Ishida S."/>
            <person name="Ono Y."/>
            <person name="Takiguchi S."/>
            <person name="Watanabe S."/>
            <person name="Yosida M."/>
            <person name="Hotuta T."/>
            <person name="Kusano J."/>
            <person name="Kanehori K."/>
            <person name="Takahashi-Fujii A."/>
            <person name="Hara H."/>
            <person name="Tanase T.-O."/>
            <person name="Nomura Y."/>
            <person name="Togiya S."/>
            <person name="Komai F."/>
            <person name="Hara R."/>
            <person name="Takeuchi K."/>
            <person name="Arita M."/>
            <person name="Imose N."/>
            <person name="Musashino K."/>
            <person name="Yuuki H."/>
            <person name="Oshima A."/>
            <person name="Sasaki N."/>
            <person name="Aotsuka S."/>
            <person name="Yoshikawa Y."/>
            <person name="Matsunawa H."/>
            <person name="Ichihara T."/>
            <person name="Shiohata N."/>
            <person name="Sano S."/>
            <person name="Moriya S."/>
            <person name="Momiyama H."/>
            <person name="Satoh N."/>
            <person name="Takami S."/>
            <person name="Terashima Y."/>
            <person name="Suzuki O."/>
            <person name="Nakagawa S."/>
            <person name="Senoh A."/>
            <person name="Mizoguchi H."/>
            <person name="Goto Y."/>
            <person name="Shimizu F."/>
            <person name="Wakebe H."/>
            <person name="Hishigaki H."/>
            <person name="Watanabe T."/>
            <person name="Sugiyama A."/>
            <person name="Takemoto M."/>
            <person name="Kawakami B."/>
            <person name="Yamazaki M."/>
            <person name="Watanabe K."/>
            <person name="Kumagai A."/>
            <person name="Itakura S."/>
            <person name="Fukuzumi Y."/>
            <person name="Fujimori Y."/>
            <person name="Komiyama M."/>
            <person name="Tashiro H."/>
            <person name="Tanigami A."/>
            <person name="Fujiwara T."/>
            <person name="Ono T."/>
            <person name="Yamada K."/>
            <person name="Fujii Y."/>
            <person name="Ozaki K."/>
            <person name="Hirao M."/>
            <person name="Ohmori Y."/>
            <person name="Kawabata A."/>
            <person name="Hikiji T."/>
            <person name="Kobatake N."/>
            <person name="Inagaki H."/>
            <person name="Ikema Y."/>
            <person name="Okamoto S."/>
            <person name="Okitani R."/>
            <person name="Kawakami T."/>
            <person name="Noguchi S."/>
            <person name="Itoh T."/>
            <person name="Shigeta K."/>
            <person name="Senba T."/>
            <person name="Matsumura K."/>
            <person name="Nakajima Y."/>
            <person name="Mizuno T."/>
            <person name="Morinaga M."/>
            <person name="Sasaki M."/>
            <person name="Togashi T."/>
            <person name="Oyama M."/>
            <person name="Hata H."/>
            <person name="Watanabe M."/>
            <person name="Komatsu T."/>
            <person name="Mizushima-Sugano J."/>
            <person name="Satoh T."/>
            <person name="Shirai Y."/>
            <person name="Takahashi Y."/>
            <person name="Nakagawa K."/>
            <person name="Okumura K."/>
            <person name="Nagase T."/>
            <person name="Nomura N."/>
            <person name="Kikuchi H."/>
            <person name="Masuho Y."/>
            <person name="Yamashita R."/>
            <person name="Nakai K."/>
            <person name="Yada T."/>
            <person name="Nakamura Y."/>
            <person name="Ohara O."/>
            <person name="Isogai T."/>
            <person name="Sugano S."/>
        </authorList>
    </citation>
    <scope>NUCLEOTIDE SEQUENCE [LARGE SCALE MRNA] (ISOFORMS 2 AND 3)</scope>
    <scope>VARIANT ILE-439</scope>
    <source>
        <tissue>Thymus</tissue>
    </source>
</reference>
<reference key="4">
    <citation type="journal article" date="2006" name="Nature">
        <title>The finished DNA sequence of human chromosome 12.</title>
        <authorList>
            <person name="Scherer S.E."/>
            <person name="Muzny D.M."/>
            <person name="Buhay C.J."/>
            <person name="Chen R."/>
            <person name="Cree A."/>
            <person name="Ding Y."/>
            <person name="Dugan-Rocha S."/>
            <person name="Gill R."/>
            <person name="Gunaratne P."/>
            <person name="Harris R.A."/>
            <person name="Hawes A.C."/>
            <person name="Hernandez J."/>
            <person name="Hodgson A.V."/>
            <person name="Hume J."/>
            <person name="Jackson A."/>
            <person name="Khan Z.M."/>
            <person name="Kovar-Smith C."/>
            <person name="Lewis L.R."/>
            <person name="Lozado R.J."/>
            <person name="Metzker M.L."/>
            <person name="Milosavljevic A."/>
            <person name="Miner G.R."/>
            <person name="Montgomery K.T."/>
            <person name="Morgan M.B."/>
            <person name="Nazareth L.V."/>
            <person name="Scott G."/>
            <person name="Sodergren E."/>
            <person name="Song X.-Z."/>
            <person name="Steffen D."/>
            <person name="Lovering R.C."/>
            <person name="Wheeler D.A."/>
            <person name="Worley K.C."/>
            <person name="Yuan Y."/>
            <person name="Zhang Z."/>
            <person name="Adams C.Q."/>
            <person name="Ansari-Lari M.A."/>
            <person name="Ayele M."/>
            <person name="Brown M.J."/>
            <person name="Chen G."/>
            <person name="Chen Z."/>
            <person name="Clerc-Blankenburg K.P."/>
            <person name="Davis C."/>
            <person name="Delgado O."/>
            <person name="Dinh H.H."/>
            <person name="Draper H."/>
            <person name="Gonzalez-Garay M.L."/>
            <person name="Havlak P."/>
            <person name="Jackson L.R."/>
            <person name="Jacob L.S."/>
            <person name="Kelly S.H."/>
            <person name="Li L."/>
            <person name="Li Z."/>
            <person name="Liu J."/>
            <person name="Liu W."/>
            <person name="Lu J."/>
            <person name="Maheshwari M."/>
            <person name="Nguyen B.-V."/>
            <person name="Okwuonu G.O."/>
            <person name="Pasternak S."/>
            <person name="Perez L.M."/>
            <person name="Plopper F.J.H."/>
            <person name="Santibanez J."/>
            <person name="Shen H."/>
            <person name="Tabor P.E."/>
            <person name="Verduzco D."/>
            <person name="Waldron L."/>
            <person name="Wang Q."/>
            <person name="Williams G.A."/>
            <person name="Zhang J."/>
            <person name="Zhou J."/>
            <person name="Allen C.C."/>
            <person name="Amin A.G."/>
            <person name="Anyalebechi V."/>
            <person name="Bailey M."/>
            <person name="Barbaria J.A."/>
            <person name="Bimage K.E."/>
            <person name="Bryant N.P."/>
            <person name="Burch P.E."/>
            <person name="Burkett C.E."/>
            <person name="Burrell K.L."/>
            <person name="Calderon E."/>
            <person name="Cardenas V."/>
            <person name="Carter K."/>
            <person name="Casias K."/>
            <person name="Cavazos I."/>
            <person name="Cavazos S.R."/>
            <person name="Ceasar H."/>
            <person name="Chacko J."/>
            <person name="Chan S.N."/>
            <person name="Chavez D."/>
            <person name="Christopoulos C."/>
            <person name="Chu J."/>
            <person name="Cockrell R."/>
            <person name="Cox C.D."/>
            <person name="Dang M."/>
            <person name="Dathorne S.R."/>
            <person name="David R."/>
            <person name="Davis C.M."/>
            <person name="Davy-Carroll L."/>
            <person name="Deshazo D.R."/>
            <person name="Donlin J.E."/>
            <person name="D'Souza L."/>
            <person name="Eaves K.A."/>
            <person name="Egan A."/>
            <person name="Emery-Cohen A.J."/>
            <person name="Escotto M."/>
            <person name="Flagg N."/>
            <person name="Forbes L.D."/>
            <person name="Gabisi A.M."/>
            <person name="Garza M."/>
            <person name="Hamilton C."/>
            <person name="Henderson N."/>
            <person name="Hernandez O."/>
            <person name="Hines S."/>
            <person name="Hogues M.E."/>
            <person name="Huang M."/>
            <person name="Idlebird D.G."/>
            <person name="Johnson R."/>
            <person name="Jolivet A."/>
            <person name="Jones S."/>
            <person name="Kagan R."/>
            <person name="King L.M."/>
            <person name="Leal B."/>
            <person name="Lebow H."/>
            <person name="Lee S."/>
            <person name="LeVan J.M."/>
            <person name="Lewis L.C."/>
            <person name="London P."/>
            <person name="Lorensuhewa L.M."/>
            <person name="Loulseged H."/>
            <person name="Lovett D.A."/>
            <person name="Lucier A."/>
            <person name="Lucier R.L."/>
            <person name="Ma J."/>
            <person name="Madu R.C."/>
            <person name="Mapua P."/>
            <person name="Martindale A.D."/>
            <person name="Martinez E."/>
            <person name="Massey E."/>
            <person name="Mawhiney S."/>
            <person name="Meador M.G."/>
            <person name="Mendez S."/>
            <person name="Mercado C."/>
            <person name="Mercado I.C."/>
            <person name="Merritt C.E."/>
            <person name="Miner Z.L."/>
            <person name="Minja E."/>
            <person name="Mitchell T."/>
            <person name="Mohabbat F."/>
            <person name="Mohabbat K."/>
            <person name="Montgomery B."/>
            <person name="Moore N."/>
            <person name="Morris S."/>
            <person name="Munidasa M."/>
            <person name="Ngo R.N."/>
            <person name="Nguyen N.B."/>
            <person name="Nickerson E."/>
            <person name="Nwaokelemeh O.O."/>
            <person name="Nwokenkwo S."/>
            <person name="Obregon M."/>
            <person name="Oguh M."/>
            <person name="Oragunye N."/>
            <person name="Oviedo R.J."/>
            <person name="Parish B.J."/>
            <person name="Parker D.N."/>
            <person name="Parrish J."/>
            <person name="Parks K.L."/>
            <person name="Paul H.A."/>
            <person name="Payton B.A."/>
            <person name="Perez A."/>
            <person name="Perrin W."/>
            <person name="Pickens A."/>
            <person name="Primus E.L."/>
            <person name="Pu L.-L."/>
            <person name="Puazo M."/>
            <person name="Quiles M.M."/>
            <person name="Quiroz J.B."/>
            <person name="Rabata D."/>
            <person name="Reeves K."/>
            <person name="Ruiz S.J."/>
            <person name="Shao H."/>
            <person name="Sisson I."/>
            <person name="Sonaike T."/>
            <person name="Sorelle R.P."/>
            <person name="Sutton A.E."/>
            <person name="Svatek A.F."/>
            <person name="Svetz L.A."/>
            <person name="Tamerisa K.S."/>
            <person name="Taylor T.R."/>
            <person name="Teague B."/>
            <person name="Thomas N."/>
            <person name="Thorn R.D."/>
            <person name="Trejos Z.Y."/>
            <person name="Trevino B.K."/>
            <person name="Ukegbu O.N."/>
            <person name="Urban J.B."/>
            <person name="Vasquez L.I."/>
            <person name="Vera V.A."/>
            <person name="Villasana D.M."/>
            <person name="Wang L."/>
            <person name="Ward-Moore S."/>
            <person name="Warren J.T."/>
            <person name="Wei X."/>
            <person name="White F."/>
            <person name="Williamson A.L."/>
            <person name="Wleczyk R."/>
            <person name="Wooden H.S."/>
            <person name="Wooden S.H."/>
            <person name="Yen J."/>
            <person name="Yoon L."/>
            <person name="Yoon V."/>
            <person name="Zorrilla S.E."/>
            <person name="Nelson D."/>
            <person name="Kucherlapati R."/>
            <person name="Weinstock G."/>
            <person name="Gibbs R.A."/>
        </authorList>
    </citation>
    <scope>NUCLEOTIDE SEQUENCE [LARGE SCALE GENOMIC DNA]</scope>
</reference>
<reference key="5">
    <citation type="submission" date="2005-07" db="EMBL/GenBank/DDBJ databases">
        <authorList>
            <person name="Mural R.J."/>
            <person name="Istrail S."/>
            <person name="Sutton G.G."/>
            <person name="Florea L."/>
            <person name="Halpern A.L."/>
            <person name="Mobarry C.M."/>
            <person name="Lippert R."/>
            <person name="Walenz B."/>
            <person name="Shatkay H."/>
            <person name="Dew I."/>
            <person name="Miller J.R."/>
            <person name="Flanigan M.J."/>
            <person name="Edwards N.J."/>
            <person name="Bolanos R."/>
            <person name="Fasulo D."/>
            <person name="Halldorsson B.V."/>
            <person name="Hannenhalli S."/>
            <person name="Turner R."/>
            <person name="Yooseph S."/>
            <person name="Lu F."/>
            <person name="Nusskern D.R."/>
            <person name="Shue B.C."/>
            <person name="Zheng X.H."/>
            <person name="Zhong F."/>
            <person name="Delcher A.L."/>
            <person name="Huson D.H."/>
            <person name="Kravitz S.A."/>
            <person name="Mouchard L."/>
            <person name="Reinert K."/>
            <person name="Remington K.A."/>
            <person name="Clark A.G."/>
            <person name="Waterman M.S."/>
            <person name="Eichler E.E."/>
            <person name="Adams M.D."/>
            <person name="Hunkapiller M.W."/>
            <person name="Myers E.W."/>
            <person name="Venter J.C."/>
        </authorList>
    </citation>
    <scope>NUCLEOTIDE SEQUENCE [LARGE SCALE GENOMIC DNA]</scope>
    <scope>VARIANT ILE-439</scope>
</reference>
<reference key="6">
    <citation type="journal article" date="2004" name="Genome Res.">
        <title>The status, quality, and expansion of the NIH full-length cDNA project: the Mammalian Gene Collection (MGC).</title>
        <authorList>
            <consortium name="The MGC Project Team"/>
        </authorList>
    </citation>
    <scope>NUCLEOTIDE SEQUENCE [LARGE SCALE MRNA] (ISOFORM 1)</scope>
    <scope>VARIANT ILE-439</scope>
</reference>
<reference key="7">
    <citation type="journal article" date="2014" name="J. Proteomics">
        <title>An enzyme assisted RP-RPLC approach for in-depth analysis of human liver phosphoproteome.</title>
        <authorList>
            <person name="Bian Y."/>
            <person name="Song C."/>
            <person name="Cheng K."/>
            <person name="Dong M."/>
            <person name="Wang F."/>
            <person name="Huang J."/>
            <person name="Sun D."/>
            <person name="Wang L."/>
            <person name="Ye M."/>
            <person name="Zou H."/>
        </authorList>
    </citation>
    <scope>IDENTIFICATION BY MASS SPECTROMETRY [LARGE SCALE ANALYSIS]</scope>
    <source>
        <tissue>Liver</tissue>
    </source>
</reference>
<reference key="8">
    <citation type="journal article" date="2005" name="Hum. Genet.">
        <title>Molecular characterization of histidinemia: identification of four missense mutations in the histidase gene.</title>
        <authorList>
            <person name="Kawai Y."/>
            <person name="Moriyama A."/>
            <person name="Asai K."/>
            <person name="Coleman-Campbell C.M."/>
            <person name="Sumi S."/>
            <person name="Morishita H."/>
            <person name="Suchi M."/>
        </authorList>
    </citation>
    <scope>VARIANTS HISTID THR-206; LEU-208; LEU-259 AND PRO-322</scope>
</reference>
<name>HUTH_HUMAN</name>
<organism>
    <name type="scientific">Homo sapiens</name>
    <name type="common">Human</name>
    <dbReference type="NCBI Taxonomy" id="9606"/>
    <lineage>
        <taxon>Eukaryota</taxon>
        <taxon>Metazoa</taxon>
        <taxon>Chordata</taxon>
        <taxon>Craniata</taxon>
        <taxon>Vertebrata</taxon>
        <taxon>Euteleostomi</taxon>
        <taxon>Mammalia</taxon>
        <taxon>Eutheria</taxon>
        <taxon>Euarchontoglires</taxon>
        <taxon>Primates</taxon>
        <taxon>Haplorrhini</taxon>
        <taxon>Catarrhini</taxon>
        <taxon>Hominidae</taxon>
        <taxon>Homo</taxon>
    </lineage>
</organism>
<comment type="catalytic activity">
    <reaction evidence="4">
        <text>L-histidine = trans-urocanate + NH4(+)</text>
        <dbReference type="Rhea" id="RHEA:21232"/>
        <dbReference type="ChEBI" id="CHEBI:17771"/>
        <dbReference type="ChEBI" id="CHEBI:28938"/>
        <dbReference type="ChEBI" id="CHEBI:57595"/>
        <dbReference type="EC" id="4.3.1.3"/>
    </reaction>
</comment>
<comment type="pathway">
    <text>Amino-acid degradation; L-histidine degradation into L-glutamate; N-formimidoyl-L-glutamate from L-histidine: step 1/3.</text>
</comment>
<comment type="alternative products">
    <event type="alternative splicing"/>
    <isoform>
        <id>P42357-1</id>
        <name>1</name>
        <sequence type="displayed"/>
    </isoform>
    <isoform>
        <id>P42357-2</id>
        <name>2</name>
        <sequence type="described" ref="VSP_044704"/>
    </isoform>
    <isoform>
        <id>P42357-3</id>
        <name>3</name>
        <sequence type="described" ref="VSP_046003"/>
    </isoform>
</comment>
<comment type="PTM">
    <text evidence="1">Contains an active site 4-methylidene-imidazol-5-one (MIO), which is formed autocatalytically by cyclization and dehydration of residues Ala-Ser-Gly.</text>
</comment>
<comment type="disease" evidence="7">
    <disease id="DI-01750">
        <name>Histidinemia</name>
        <acronym>HISTID</acronym>
        <description>Autosomal recessive disease characterized by increased histidine and histamine as well as decreased urocanic acid in body fluids.</description>
        <dbReference type="MIM" id="235800"/>
    </disease>
    <text>The disease is caused by variants affecting the gene represented in this entry.</text>
</comment>
<comment type="similarity">
    <text evidence="11">Belongs to the PAL/histidase family.</text>
</comment>
<keyword id="KW-0025">Alternative splicing</keyword>
<keyword id="KW-0225">Disease variant</keyword>
<keyword id="KW-0369">Histidine metabolism</keyword>
<keyword id="KW-0456">Lyase</keyword>
<keyword id="KW-0597">Phosphoprotein</keyword>
<keyword id="KW-1267">Proteomics identification</keyword>
<keyword id="KW-1185">Reference proteome</keyword>
<dbReference type="EC" id="4.3.1.3"/>
<dbReference type="EMBL" id="D16626">
    <property type="protein sequence ID" value="BAA04047.1"/>
    <property type="molecule type" value="mRNA"/>
</dbReference>
<dbReference type="EMBL" id="AB042217">
    <property type="protein sequence ID" value="BAB61863.1"/>
    <property type="molecule type" value="Genomic_DNA"/>
</dbReference>
<dbReference type="EMBL" id="AK298736">
    <property type="protein sequence ID" value="BAG60883.1"/>
    <property type="molecule type" value="mRNA"/>
</dbReference>
<dbReference type="EMBL" id="AK303544">
    <property type="protein sequence ID" value="BAG64570.1"/>
    <property type="molecule type" value="mRNA"/>
</dbReference>
<dbReference type="EMBL" id="AC007298">
    <property type="status" value="NOT_ANNOTATED_CDS"/>
    <property type="molecule type" value="Genomic_DNA"/>
</dbReference>
<dbReference type="EMBL" id="AC126174">
    <property type="status" value="NOT_ANNOTATED_CDS"/>
    <property type="molecule type" value="Genomic_DNA"/>
</dbReference>
<dbReference type="EMBL" id="CH471054">
    <property type="protein sequence ID" value="EAW97556.1"/>
    <property type="molecule type" value="Genomic_DNA"/>
</dbReference>
<dbReference type="EMBL" id="BC096097">
    <property type="protein sequence ID" value="AAH96097.1"/>
    <property type="molecule type" value="mRNA"/>
</dbReference>
<dbReference type="EMBL" id="BC096098">
    <property type="protein sequence ID" value="AAH96098.1"/>
    <property type="molecule type" value="mRNA"/>
</dbReference>
<dbReference type="EMBL" id="BC096099">
    <property type="protein sequence ID" value="AAH96099.1"/>
    <property type="molecule type" value="mRNA"/>
</dbReference>
<dbReference type="CCDS" id="CCDS58264.1">
    <molecule id="P42357-3"/>
</dbReference>
<dbReference type="CCDS" id="CCDS58265.1">
    <molecule id="P42357-2"/>
</dbReference>
<dbReference type="CCDS" id="CCDS9058.1">
    <molecule id="P42357-1"/>
</dbReference>
<dbReference type="PIR" id="S43415">
    <property type="entry name" value="S43415"/>
</dbReference>
<dbReference type="RefSeq" id="NP_001245262.1">
    <molecule id="P42357-3"/>
    <property type="nucleotide sequence ID" value="NM_001258333.2"/>
</dbReference>
<dbReference type="RefSeq" id="NP_001245263.1">
    <molecule id="P42357-2"/>
    <property type="nucleotide sequence ID" value="NM_001258334.2"/>
</dbReference>
<dbReference type="RefSeq" id="NP_002099.1">
    <molecule id="P42357-1"/>
    <property type="nucleotide sequence ID" value="NM_002108.4"/>
</dbReference>
<dbReference type="SMR" id="P42357"/>
<dbReference type="BioGRID" id="109284">
    <property type="interactions" value="191"/>
</dbReference>
<dbReference type="FunCoup" id="P42357">
    <property type="interactions" value="865"/>
</dbReference>
<dbReference type="IntAct" id="P42357">
    <property type="interactions" value="119"/>
</dbReference>
<dbReference type="MINT" id="P42357"/>
<dbReference type="STRING" id="9606.ENSP00000261208"/>
<dbReference type="ChEMBL" id="CHEMBL4003"/>
<dbReference type="DrugBank" id="DB00117">
    <property type="generic name" value="Histidine"/>
</dbReference>
<dbReference type="GlyGen" id="P42357">
    <property type="glycosylation" value="1 site, 1 O-linked glycan (1 site)"/>
</dbReference>
<dbReference type="iPTMnet" id="P42357"/>
<dbReference type="PhosphoSitePlus" id="P42357"/>
<dbReference type="BioMuta" id="HAL"/>
<dbReference type="DMDM" id="1170423"/>
<dbReference type="jPOST" id="P42357"/>
<dbReference type="MassIVE" id="P42357"/>
<dbReference type="PaxDb" id="9606-ENSP00000261208"/>
<dbReference type="PeptideAtlas" id="P42357"/>
<dbReference type="PRIDE" id="P42357"/>
<dbReference type="ProteomicsDB" id="24406"/>
<dbReference type="ProteomicsDB" id="25764"/>
<dbReference type="ProteomicsDB" id="55514">
    <molecule id="P42357-1"/>
</dbReference>
<dbReference type="Pumba" id="P42357"/>
<dbReference type="Antibodypedia" id="30149">
    <property type="antibodies" value="147 antibodies from 26 providers"/>
</dbReference>
<dbReference type="DNASU" id="3034"/>
<dbReference type="Ensembl" id="ENST00000261208.8">
    <molecule id="P42357-1"/>
    <property type="protein sequence ID" value="ENSP00000261208.3"/>
    <property type="gene ID" value="ENSG00000084110.11"/>
</dbReference>
<dbReference type="Ensembl" id="ENST00000538703.5">
    <molecule id="P42357-2"/>
    <property type="protein sequence ID" value="ENSP00000440861.1"/>
    <property type="gene ID" value="ENSG00000084110.11"/>
</dbReference>
<dbReference type="Ensembl" id="ENST00000541929.5">
    <molecule id="P42357-3"/>
    <property type="protein sequence ID" value="ENSP00000446364.1"/>
    <property type="gene ID" value="ENSG00000084110.11"/>
</dbReference>
<dbReference type="GeneID" id="3034"/>
<dbReference type="KEGG" id="hsa:3034"/>
<dbReference type="MANE-Select" id="ENST00000261208.8">
    <property type="protein sequence ID" value="ENSP00000261208.3"/>
    <property type="RefSeq nucleotide sequence ID" value="NM_002108.4"/>
    <property type="RefSeq protein sequence ID" value="NP_002099.1"/>
</dbReference>
<dbReference type="UCSC" id="uc001tem.2">
    <molecule id="P42357-1"/>
    <property type="organism name" value="human"/>
</dbReference>
<dbReference type="AGR" id="HGNC:4806"/>
<dbReference type="CTD" id="3034"/>
<dbReference type="DisGeNET" id="3034"/>
<dbReference type="GeneCards" id="HAL"/>
<dbReference type="HGNC" id="HGNC:4806">
    <property type="gene designation" value="HAL"/>
</dbReference>
<dbReference type="HPA" id="ENSG00000084110">
    <property type="expression patterns" value="Group enriched (liver, skin)"/>
</dbReference>
<dbReference type="MalaCards" id="HAL"/>
<dbReference type="MIM" id="235800">
    <property type="type" value="phenotype"/>
</dbReference>
<dbReference type="MIM" id="609457">
    <property type="type" value="gene"/>
</dbReference>
<dbReference type="neXtProt" id="NX_P42357"/>
<dbReference type="OpenTargets" id="ENSG00000084110"/>
<dbReference type="Orphanet" id="2157">
    <property type="disease" value="Histidinemia"/>
</dbReference>
<dbReference type="PharmGKB" id="PA29181"/>
<dbReference type="VEuPathDB" id="HostDB:ENSG00000084110"/>
<dbReference type="eggNOG" id="KOG0222">
    <property type="taxonomic scope" value="Eukaryota"/>
</dbReference>
<dbReference type="GeneTree" id="ENSGT00390000009047"/>
<dbReference type="HOGENOM" id="CLU_014801_4_1_1"/>
<dbReference type="InParanoid" id="P42357"/>
<dbReference type="OMA" id="YSLRCMP"/>
<dbReference type="OrthoDB" id="10051290at2759"/>
<dbReference type="PAN-GO" id="P42357">
    <property type="GO annotations" value="2 GO annotations based on evolutionary models"/>
</dbReference>
<dbReference type="PhylomeDB" id="P42357"/>
<dbReference type="TreeFam" id="TF313824"/>
<dbReference type="BioCyc" id="MetaCyc:HS01466-MONOMER"/>
<dbReference type="BRENDA" id="4.3.1.3">
    <property type="organism ID" value="2681"/>
</dbReference>
<dbReference type="PathwayCommons" id="P42357"/>
<dbReference type="Reactome" id="R-HSA-70921">
    <property type="pathway name" value="Histidine catabolism"/>
</dbReference>
<dbReference type="SignaLink" id="P42357"/>
<dbReference type="UniPathway" id="UPA00379">
    <property type="reaction ID" value="UER00549"/>
</dbReference>
<dbReference type="BioGRID-ORCS" id="3034">
    <property type="hits" value="12 hits in 1152 CRISPR screens"/>
</dbReference>
<dbReference type="GeneWiki" id="Histidine_ammonia-lyase"/>
<dbReference type="GenomeRNAi" id="3034"/>
<dbReference type="Pharos" id="P42357">
    <property type="development level" value="Tbio"/>
</dbReference>
<dbReference type="PRO" id="PR:P42357"/>
<dbReference type="Proteomes" id="UP000005640">
    <property type="component" value="Chromosome 12"/>
</dbReference>
<dbReference type="RNAct" id="P42357">
    <property type="molecule type" value="protein"/>
</dbReference>
<dbReference type="Bgee" id="ENSG00000084110">
    <property type="expression patterns" value="Expressed in right lobe of liver and 116 other cell types or tissues"/>
</dbReference>
<dbReference type="ExpressionAtlas" id="P42357">
    <property type="expression patterns" value="baseline and differential"/>
</dbReference>
<dbReference type="GO" id="GO:0005829">
    <property type="term" value="C:cytosol"/>
    <property type="evidence" value="ECO:0000304"/>
    <property type="project" value="Reactome"/>
</dbReference>
<dbReference type="GO" id="GO:0004397">
    <property type="term" value="F:histidine ammonia-lyase activity"/>
    <property type="evidence" value="ECO:0000269"/>
    <property type="project" value="Reactome"/>
</dbReference>
<dbReference type="GO" id="GO:0006548">
    <property type="term" value="P:L-histidine catabolic process"/>
    <property type="evidence" value="ECO:0000318"/>
    <property type="project" value="GO_Central"/>
</dbReference>
<dbReference type="GO" id="GO:0019556">
    <property type="term" value="P:L-histidine catabolic process to glutamate and formamide"/>
    <property type="evidence" value="ECO:0007669"/>
    <property type="project" value="UniProtKB-UniPathway"/>
</dbReference>
<dbReference type="GO" id="GO:0019557">
    <property type="term" value="P:L-histidine catabolic process to glutamate and formate"/>
    <property type="evidence" value="ECO:0007669"/>
    <property type="project" value="UniProtKB-UniPathway"/>
</dbReference>
<dbReference type="CDD" id="cd00332">
    <property type="entry name" value="PAL-HAL"/>
    <property type="match status" value="1"/>
</dbReference>
<dbReference type="FunFam" id="1.10.275.10:FF:000007">
    <property type="entry name" value="Histidine ammonia-lyase"/>
    <property type="match status" value="1"/>
</dbReference>
<dbReference type="FunFam" id="1.20.200.10:FF:000003">
    <property type="entry name" value="Histidine ammonia-lyase"/>
    <property type="match status" value="1"/>
</dbReference>
<dbReference type="FunFam" id="3.10.20.90:FF:000111">
    <property type="entry name" value="Histidine ammonia-lyase"/>
    <property type="match status" value="1"/>
</dbReference>
<dbReference type="Gene3D" id="1.20.200.10">
    <property type="entry name" value="Fumarase/aspartase (Central domain)"/>
    <property type="match status" value="1"/>
</dbReference>
<dbReference type="Gene3D" id="1.10.275.10">
    <property type="entry name" value="Fumarase/aspartase (N-terminal domain)"/>
    <property type="match status" value="1"/>
</dbReference>
<dbReference type="Gene3D" id="3.10.20.90">
    <property type="entry name" value="Phosphatidylinositol 3-kinase Catalytic Subunit, Chain A, domain 1"/>
    <property type="match status" value="1"/>
</dbReference>
<dbReference type="InterPro" id="IPR001106">
    <property type="entry name" value="Aromatic_Lyase"/>
</dbReference>
<dbReference type="InterPro" id="IPR024083">
    <property type="entry name" value="Fumarase/histidase_N"/>
</dbReference>
<dbReference type="InterPro" id="IPR005921">
    <property type="entry name" value="HutH"/>
</dbReference>
<dbReference type="InterPro" id="IPR008948">
    <property type="entry name" value="L-Aspartase-like"/>
</dbReference>
<dbReference type="InterPro" id="IPR022313">
    <property type="entry name" value="Phe/His_NH3-lyase_AS"/>
</dbReference>
<dbReference type="NCBIfam" id="TIGR01225">
    <property type="entry name" value="hutH"/>
    <property type="match status" value="1"/>
</dbReference>
<dbReference type="NCBIfam" id="NF006871">
    <property type="entry name" value="PRK09367.1"/>
    <property type="match status" value="1"/>
</dbReference>
<dbReference type="PANTHER" id="PTHR10362">
    <property type="entry name" value="HISTIDINE AMMONIA-LYASE"/>
    <property type="match status" value="1"/>
</dbReference>
<dbReference type="Pfam" id="PF00221">
    <property type="entry name" value="Lyase_aromatic"/>
    <property type="match status" value="1"/>
</dbReference>
<dbReference type="SUPFAM" id="SSF48557">
    <property type="entry name" value="L-aspartase-like"/>
    <property type="match status" value="1"/>
</dbReference>
<dbReference type="PROSITE" id="PS00488">
    <property type="entry name" value="PAL_HISTIDASE"/>
    <property type="match status" value="1"/>
</dbReference>
<accession>P42357</accession>
<accession>B4DQC1</accession>
<accession>B4E0V8</accession>
<accession>F5GXF2</accession>
<accession>F5H1U5</accession>
<accession>Q4VB92</accession>
<accession>Q4VB93</accession>
<proteinExistence type="evidence at protein level"/>
<sequence length="657" mass="72698">MPRYTVHVRGEWLAVPCQDAQLTVGWLGREAVRRYIKNKPDNGGFTSVDDAHFLVRRCKGLGLLDNEDRLEVALENNEFVEVVIEGDAMSPDFIPSQPEGVYLYSKYREPEKYIELDGDRLTTEDLVNLGKGRYKIKLTPTAEKRVQKSREVIDSIIKEKTVVYGITTGFGKFARTVIPINKLQELQVNLVRSHSSGVGKPLSPERCRMLLALRINVLAKGYSGISLETLKQVIEMFNASCLPYVPEKGTVGASGDLAPLSHLALGLVGEGKMWSPKSGWADAKYVLEAHGLKPVILKPKEGLALINGTQMITSLGCEAVERASAIARQADIVAALTLEVLKGTTKAFDTDIHALRPHRGQIEVAFRFRSLLDSDHHPSEIAESHRFCDRVQDAYTLRCCPQVHGVVNDTIAFVKNIITTELNSATDNPMVFANRGETVSGGNFHGEYPAKALDYLAIGIHELAAISERRIERLCNPSLSELPAFLVAEGGLNSGFMIAHCTAAALVSENKALCHPSSVDSLSTSAATEDHVSMGGWAARKALRVIEHVEQVLAIELLAACQGIEFLRPLKTTTPLEKVYDLVRSVVRPWIKDRFMAPDIEAAHRLLLEQKVWEVAAPYIEKYRMEHIPESRPLSPTAFSLQFLHKKSTKIPESEDL</sequence>
<gene>
    <name type="primary">HAL</name>
    <name type="synonym">HIS</name>
</gene>
<protein>
    <recommendedName>
        <fullName>Histidine ammonia-lyase</fullName>
        <shortName>Histidase</shortName>
        <ecNumber>4.3.1.3</ecNumber>
    </recommendedName>
</protein>